<keyword id="KW-0067">ATP-binding</keyword>
<keyword id="KW-0418">Kinase</keyword>
<keyword id="KW-0441">Lipid A biosynthesis</keyword>
<keyword id="KW-0444">Lipid biosynthesis</keyword>
<keyword id="KW-0443">Lipid metabolism</keyword>
<keyword id="KW-0547">Nucleotide-binding</keyword>
<keyword id="KW-1185">Reference proteome</keyword>
<keyword id="KW-0808">Transferase</keyword>
<evidence type="ECO:0000255" key="1">
    <source>
        <dbReference type="HAMAP-Rule" id="MF_00409"/>
    </source>
</evidence>
<accession>Q9KQX0</accession>
<sequence>MVIEKIWFHRHPLGYLLWPLLWPFSVLFGVISRSRRKAYQTGDKPSYRAPLPVVVVGNITAGGNGKTPVVVWLVETLQNLGYRPGVVSRGYGAKAPSYPLVVNEQTPAQHCGDEPKLIFQRTKAPVAVDPVRSQAVKALLEHGVNVIVTDDGLQHYALQRDIEIAVVDGVRRFGNQELIPLGPLREPVSRLDEVDFIITNGGVAKANEIAMRLQPTDAVNLKTGERCAVSKLTRLCAMAGIGHPSRFFNTLRELNADLVHCQGFADHQAFDAAQLNQLAQQGAHLIMTEKDAVKCAEFAQPNWWYLPVSAQFAPEAEQRIVDKIKEVMEPYGSPSA</sequence>
<dbReference type="EC" id="2.7.1.130" evidence="1"/>
<dbReference type="EMBL" id="AE003852">
    <property type="protein sequence ID" value="AAF95025.1"/>
    <property type="molecule type" value="Genomic_DNA"/>
</dbReference>
<dbReference type="PIR" id="C82146">
    <property type="entry name" value="C82146"/>
</dbReference>
<dbReference type="RefSeq" id="NP_231511.1">
    <property type="nucleotide sequence ID" value="NC_002505.1"/>
</dbReference>
<dbReference type="SMR" id="Q9KQX0"/>
<dbReference type="STRING" id="243277.VC_1877"/>
<dbReference type="DNASU" id="2613631"/>
<dbReference type="EnsemblBacteria" id="AAF95025">
    <property type="protein sequence ID" value="AAF95025"/>
    <property type="gene ID" value="VC_1877"/>
</dbReference>
<dbReference type="KEGG" id="vch:VC_1877"/>
<dbReference type="PATRIC" id="fig|243277.26.peg.1793"/>
<dbReference type="eggNOG" id="COG1663">
    <property type="taxonomic scope" value="Bacteria"/>
</dbReference>
<dbReference type="HOGENOM" id="CLU_038816_2_0_6"/>
<dbReference type="BioCyc" id="MetaCyc:FY484_RS09400-MONOMER"/>
<dbReference type="UniPathway" id="UPA00359">
    <property type="reaction ID" value="UER00482"/>
</dbReference>
<dbReference type="Proteomes" id="UP000000584">
    <property type="component" value="Chromosome 1"/>
</dbReference>
<dbReference type="GO" id="GO:0005886">
    <property type="term" value="C:plasma membrane"/>
    <property type="evidence" value="ECO:0000318"/>
    <property type="project" value="GO_Central"/>
</dbReference>
<dbReference type="GO" id="GO:0005524">
    <property type="term" value="F:ATP binding"/>
    <property type="evidence" value="ECO:0007669"/>
    <property type="project" value="UniProtKB-UniRule"/>
</dbReference>
<dbReference type="GO" id="GO:0009029">
    <property type="term" value="F:tetraacyldisaccharide 4'-kinase activity"/>
    <property type="evidence" value="ECO:0000318"/>
    <property type="project" value="GO_Central"/>
</dbReference>
<dbReference type="GO" id="GO:0009245">
    <property type="term" value="P:lipid A biosynthetic process"/>
    <property type="evidence" value="ECO:0000318"/>
    <property type="project" value="GO_Central"/>
</dbReference>
<dbReference type="GO" id="GO:0009244">
    <property type="term" value="P:lipopolysaccharide core region biosynthetic process"/>
    <property type="evidence" value="ECO:0000318"/>
    <property type="project" value="GO_Central"/>
</dbReference>
<dbReference type="HAMAP" id="MF_00409">
    <property type="entry name" value="LpxK"/>
    <property type="match status" value="1"/>
</dbReference>
<dbReference type="InterPro" id="IPR003758">
    <property type="entry name" value="LpxK"/>
</dbReference>
<dbReference type="InterPro" id="IPR027417">
    <property type="entry name" value="P-loop_NTPase"/>
</dbReference>
<dbReference type="NCBIfam" id="TIGR00682">
    <property type="entry name" value="lpxK"/>
    <property type="match status" value="1"/>
</dbReference>
<dbReference type="PANTHER" id="PTHR42724">
    <property type="entry name" value="TETRAACYLDISACCHARIDE 4'-KINASE"/>
    <property type="match status" value="1"/>
</dbReference>
<dbReference type="PANTHER" id="PTHR42724:SF1">
    <property type="entry name" value="TETRAACYLDISACCHARIDE 4'-KINASE, MITOCHONDRIAL-RELATED"/>
    <property type="match status" value="1"/>
</dbReference>
<dbReference type="Pfam" id="PF02606">
    <property type="entry name" value="LpxK"/>
    <property type="match status" value="1"/>
</dbReference>
<dbReference type="SUPFAM" id="SSF52540">
    <property type="entry name" value="P-loop containing nucleoside triphosphate hydrolases"/>
    <property type="match status" value="1"/>
</dbReference>
<proteinExistence type="inferred from homology"/>
<gene>
    <name evidence="1" type="primary">lpxK</name>
    <name type="ordered locus">VC_1877</name>
</gene>
<name>LPXK_VIBCH</name>
<organism>
    <name type="scientific">Vibrio cholerae serotype O1 (strain ATCC 39315 / El Tor Inaba N16961)</name>
    <dbReference type="NCBI Taxonomy" id="243277"/>
    <lineage>
        <taxon>Bacteria</taxon>
        <taxon>Pseudomonadati</taxon>
        <taxon>Pseudomonadota</taxon>
        <taxon>Gammaproteobacteria</taxon>
        <taxon>Vibrionales</taxon>
        <taxon>Vibrionaceae</taxon>
        <taxon>Vibrio</taxon>
    </lineage>
</organism>
<reference key="1">
    <citation type="journal article" date="2000" name="Nature">
        <title>DNA sequence of both chromosomes of the cholera pathogen Vibrio cholerae.</title>
        <authorList>
            <person name="Heidelberg J.F."/>
            <person name="Eisen J.A."/>
            <person name="Nelson W.C."/>
            <person name="Clayton R.A."/>
            <person name="Gwinn M.L."/>
            <person name="Dodson R.J."/>
            <person name="Haft D.H."/>
            <person name="Hickey E.K."/>
            <person name="Peterson J.D."/>
            <person name="Umayam L.A."/>
            <person name="Gill S.R."/>
            <person name="Nelson K.E."/>
            <person name="Read T.D."/>
            <person name="Tettelin H."/>
            <person name="Richardson D.L."/>
            <person name="Ermolaeva M.D."/>
            <person name="Vamathevan J.J."/>
            <person name="Bass S."/>
            <person name="Qin H."/>
            <person name="Dragoi I."/>
            <person name="Sellers P."/>
            <person name="McDonald L.A."/>
            <person name="Utterback T.R."/>
            <person name="Fleischmann R.D."/>
            <person name="Nierman W.C."/>
            <person name="White O."/>
            <person name="Salzberg S.L."/>
            <person name="Smith H.O."/>
            <person name="Colwell R.R."/>
            <person name="Mekalanos J.J."/>
            <person name="Venter J.C."/>
            <person name="Fraser C.M."/>
        </authorList>
    </citation>
    <scope>NUCLEOTIDE SEQUENCE [LARGE SCALE GENOMIC DNA]</scope>
    <source>
        <strain>ATCC 39315 / El Tor Inaba N16961</strain>
    </source>
</reference>
<feature type="chain" id="PRO_0000190953" description="Tetraacyldisaccharide 4'-kinase">
    <location>
        <begin position="1"/>
        <end position="336"/>
    </location>
</feature>
<feature type="binding site" evidence="1">
    <location>
        <begin position="60"/>
        <end position="67"/>
    </location>
    <ligand>
        <name>ATP</name>
        <dbReference type="ChEBI" id="CHEBI:30616"/>
    </ligand>
</feature>
<protein>
    <recommendedName>
        <fullName evidence="1">Tetraacyldisaccharide 4'-kinase</fullName>
        <ecNumber evidence="1">2.7.1.130</ecNumber>
    </recommendedName>
    <alternativeName>
        <fullName evidence="1">Lipid A 4'-kinase</fullName>
    </alternativeName>
</protein>
<comment type="function">
    <text evidence="1">Transfers the gamma-phosphate of ATP to the 4'-position of a tetraacyldisaccharide 1-phosphate intermediate (termed DS-1-P) to form tetraacyldisaccharide 1,4'-bis-phosphate (lipid IVA).</text>
</comment>
<comment type="catalytic activity">
    <reaction evidence="1">
        <text>a lipid A disaccharide + ATP = a lipid IVA + ADP + H(+)</text>
        <dbReference type="Rhea" id="RHEA:67840"/>
        <dbReference type="ChEBI" id="CHEBI:15378"/>
        <dbReference type="ChEBI" id="CHEBI:30616"/>
        <dbReference type="ChEBI" id="CHEBI:176343"/>
        <dbReference type="ChEBI" id="CHEBI:176425"/>
        <dbReference type="ChEBI" id="CHEBI:456216"/>
        <dbReference type="EC" id="2.7.1.130"/>
    </reaction>
</comment>
<comment type="pathway">
    <text evidence="1">Glycolipid biosynthesis; lipid IV(A) biosynthesis; lipid IV(A) from (3R)-3-hydroxytetradecanoyl-[acyl-carrier-protein] and UDP-N-acetyl-alpha-D-glucosamine: step 6/6.</text>
</comment>
<comment type="similarity">
    <text evidence="1">Belongs to the LpxK family.</text>
</comment>